<accession>Q1E0G9</accession>
<accession>J3KCV2</accession>
<proteinExistence type="inferred from homology"/>
<keyword id="KW-0175">Coiled coil</keyword>
<keyword id="KW-0539">Nucleus</keyword>
<keyword id="KW-1185">Reference proteome</keyword>
<keyword id="KW-0698">rRNA processing</keyword>
<organism>
    <name type="scientific">Coccidioides immitis (strain RS)</name>
    <name type="common">Valley fever fungus</name>
    <dbReference type="NCBI Taxonomy" id="246410"/>
    <lineage>
        <taxon>Eukaryota</taxon>
        <taxon>Fungi</taxon>
        <taxon>Dikarya</taxon>
        <taxon>Ascomycota</taxon>
        <taxon>Pezizomycotina</taxon>
        <taxon>Eurotiomycetes</taxon>
        <taxon>Eurotiomycetidae</taxon>
        <taxon>Onygenales</taxon>
        <taxon>Onygenaceae</taxon>
        <taxon>Coccidioides</taxon>
    </lineage>
</organism>
<dbReference type="EMBL" id="GG704916">
    <property type="protein sequence ID" value="EAS32920.3"/>
    <property type="molecule type" value="Genomic_DNA"/>
</dbReference>
<dbReference type="RefSeq" id="XP_001244503.1">
    <property type="nucleotide sequence ID" value="XM_001244502.2"/>
</dbReference>
<dbReference type="SMR" id="Q1E0G9"/>
<dbReference type="FunCoup" id="Q1E0G9">
    <property type="interactions" value="149"/>
</dbReference>
<dbReference type="STRING" id="246410.Q1E0G9"/>
<dbReference type="GeneID" id="4562814"/>
<dbReference type="KEGG" id="cim:CIMG_03944"/>
<dbReference type="VEuPathDB" id="FungiDB:CIMG_03944"/>
<dbReference type="InParanoid" id="Q1E0G9"/>
<dbReference type="OMA" id="KCMEEGT"/>
<dbReference type="OrthoDB" id="47732at2759"/>
<dbReference type="Proteomes" id="UP000001261">
    <property type="component" value="Unassembled WGS sequence"/>
</dbReference>
<dbReference type="GO" id="GO:0005730">
    <property type="term" value="C:nucleolus"/>
    <property type="evidence" value="ECO:0007669"/>
    <property type="project" value="UniProtKB-SubCell"/>
</dbReference>
<dbReference type="GO" id="GO:0030688">
    <property type="term" value="C:preribosome, small subunit precursor"/>
    <property type="evidence" value="ECO:0007669"/>
    <property type="project" value="TreeGrafter"/>
</dbReference>
<dbReference type="GO" id="GO:0000462">
    <property type="term" value="P:maturation of SSU-rRNA from tricistronic rRNA transcript (SSU-rRNA, 5.8S rRNA, LSU-rRNA)"/>
    <property type="evidence" value="ECO:0007669"/>
    <property type="project" value="TreeGrafter"/>
</dbReference>
<dbReference type="InterPro" id="IPR019310">
    <property type="entry name" value="Efg1"/>
</dbReference>
<dbReference type="InterPro" id="IPR050786">
    <property type="entry name" value="EFG1_rRNA-proc"/>
</dbReference>
<dbReference type="PANTHER" id="PTHR33911">
    <property type="entry name" value="RRNA-PROCESSING PROTEIN EFG1"/>
    <property type="match status" value="1"/>
</dbReference>
<dbReference type="PANTHER" id="PTHR33911:SF1">
    <property type="entry name" value="RRNA-PROCESSING PROTEIN EFG1"/>
    <property type="match status" value="1"/>
</dbReference>
<dbReference type="Pfam" id="PF10153">
    <property type="entry name" value="Efg1"/>
    <property type="match status" value="1"/>
</dbReference>
<evidence type="ECO:0000250" key="1"/>
<evidence type="ECO:0000255" key="2"/>
<evidence type="ECO:0000256" key="3">
    <source>
        <dbReference type="SAM" id="MobiDB-lite"/>
    </source>
</evidence>
<evidence type="ECO:0000305" key="4"/>
<name>EFG1P_COCIM</name>
<reference key="1">
    <citation type="journal article" date="2009" name="Genome Res.">
        <title>Comparative genomic analyses of the human fungal pathogens Coccidioides and their relatives.</title>
        <authorList>
            <person name="Sharpton T.J."/>
            <person name="Stajich J.E."/>
            <person name="Rounsley S.D."/>
            <person name="Gardner M.J."/>
            <person name="Wortman J.R."/>
            <person name="Jordar V.S."/>
            <person name="Maiti R."/>
            <person name="Kodira C.D."/>
            <person name="Neafsey D.E."/>
            <person name="Zeng Q."/>
            <person name="Hung C.-Y."/>
            <person name="McMahan C."/>
            <person name="Muszewska A."/>
            <person name="Grynberg M."/>
            <person name="Mandel M.A."/>
            <person name="Kellner E.M."/>
            <person name="Barker B.M."/>
            <person name="Galgiani J.N."/>
            <person name="Orbach M.J."/>
            <person name="Kirkland T.N."/>
            <person name="Cole G.T."/>
            <person name="Henn M.R."/>
            <person name="Birren B.W."/>
            <person name="Taylor J.W."/>
        </authorList>
    </citation>
    <scope>NUCLEOTIDE SEQUENCE [LARGE SCALE GENOMIC DNA]</scope>
    <source>
        <strain>RS</strain>
    </source>
</reference>
<reference key="2">
    <citation type="journal article" date="2010" name="Genome Res.">
        <title>Population genomic sequencing of Coccidioides fungi reveals recent hybridization and transposon control.</title>
        <authorList>
            <person name="Neafsey D.E."/>
            <person name="Barker B.M."/>
            <person name="Sharpton T.J."/>
            <person name="Stajich J.E."/>
            <person name="Park D.J."/>
            <person name="Whiston E."/>
            <person name="Hung C.-Y."/>
            <person name="McMahan C."/>
            <person name="White J."/>
            <person name="Sykes S."/>
            <person name="Heiman D."/>
            <person name="Young S."/>
            <person name="Zeng Q."/>
            <person name="Abouelleil A."/>
            <person name="Aftuck L."/>
            <person name="Bessette D."/>
            <person name="Brown A."/>
            <person name="FitzGerald M."/>
            <person name="Lui A."/>
            <person name="Macdonald J.P."/>
            <person name="Priest M."/>
            <person name="Orbach M.J."/>
            <person name="Galgiani J.N."/>
            <person name="Kirkland T.N."/>
            <person name="Cole G.T."/>
            <person name="Birren B.W."/>
            <person name="Henn M.R."/>
            <person name="Taylor J.W."/>
            <person name="Rounsley S.D."/>
        </authorList>
    </citation>
    <scope>GENOME REANNOTATION</scope>
    <source>
        <strain>RS</strain>
    </source>
</reference>
<sequence>MSLHEPEAQPSLKKRRRDSFSNADPKRVKRLHSGTQRLHYHDIGPSVNELKTRIRDVKRLLAKRIDDLPADVRVAKERELAECQRDLEKAEVKKQRSKMIQKYHFVRFLERKRATKELKRLKGQLHKLENDDRLDPNARENSIETLNRKISASEIDLNYTIYSPLTEKYISLYPNERRKQQPMEPEESNVIRTNSGEKPPLWYTVKQSMADGTLELLRDGKLGIGLSGEKKDSNNADVSLKSNTMSLLVHRKQKKPKSKIKVDGDEDAKRSSARSVQEGTRNENKRTSKEDVQGEDDDAESESDGGFFE</sequence>
<comment type="function">
    <text evidence="1">Involved in rRNA processing.</text>
</comment>
<comment type="subcellular location">
    <subcellularLocation>
        <location evidence="1">Nucleus</location>
        <location evidence="1">Nucleolus</location>
    </subcellularLocation>
</comment>
<comment type="similarity">
    <text evidence="4">Belongs to the EFG1 family.</text>
</comment>
<feature type="chain" id="PRO_0000330268" description="rRNA-processing protein EFG1">
    <location>
        <begin position="1"/>
        <end position="309"/>
    </location>
</feature>
<feature type="region of interest" description="Disordered" evidence="3">
    <location>
        <begin position="1"/>
        <end position="37"/>
    </location>
</feature>
<feature type="region of interest" description="Disordered" evidence="3">
    <location>
        <begin position="176"/>
        <end position="196"/>
    </location>
</feature>
<feature type="region of interest" description="Disordered" evidence="3">
    <location>
        <begin position="244"/>
        <end position="309"/>
    </location>
</feature>
<feature type="coiled-coil region" evidence="2">
    <location>
        <begin position="70"/>
        <end position="134"/>
    </location>
</feature>
<feature type="compositionally biased region" description="Basic residues" evidence="3">
    <location>
        <begin position="249"/>
        <end position="259"/>
    </location>
</feature>
<feature type="compositionally biased region" description="Basic and acidic residues" evidence="3">
    <location>
        <begin position="260"/>
        <end position="270"/>
    </location>
</feature>
<feature type="compositionally biased region" description="Basic and acidic residues" evidence="3">
    <location>
        <begin position="280"/>
        <end position="292"/>
    </location>
</feature>
<feature type="compositionally biased region" description="Acidic residues" evidence="3">
    <location>
        <begin position="293"/>
        <end position="303"/>
    </location>
</feature>
<gene>
    <name type="primary">EFG1</name>
    <name type="ORF">CIMG_03944</name>
</gene>
<protein>
    <recommendedName>
        <fullName>rRNA-processing protein EFG1</fullName>
    </recommendedName>
</protein>